<evidence type="ECO:0000250" key="1">
    <source>
        <dbReference type="UniProtKB" id="L0E2Z4"/>
    </source>
</evidence>
<evidence type="ECO:0000250" key="2">
    <source>
        <dbReference type="UniProtKB" id="O93868"/>
    </source>
</evidence>
<evidence type="ECO:0000250" key="3">
    <source>
        <dbReference type="UniProtKB" id="P50161"/>
    </source>
</evidence>
<evidence type="ECO:0000255" key="4">
    <source>
        <dbReference type="PROSITE-ProRule" id="PRU10001"/>
    </source>
</evidence>
<evidence type="ECO:0000269" key="5">
    <source>
    </source>
</evidence>
<evidence type="ECO:0000269" key="6">
    <source>
    </source>
</evidence>
<evidence type="ECO:0000269" key="7">
    <source>
    </source>
</evidence>
<evidence type="ECO:0000269" key="8">
    <source>
    </source>
</evidence>
<evidence type="ECO:0000269" key="9">
    <source>
    </source>
</evidence>
<evidence type="ECO:0000269" key="10">
    <source>
    </source>
</evidence>
<evidence type="ECO:0000269" key="11">
    <source>
    </source>
</evidence>
<evidence type="ECO:0000303" key="12">
    <source>
    </source>
</evidence>
<evidence type="ECO:0000303" key="13">
    <source>
    </source>
</evidence>
<evidence type="ECO:0000303" key="14">
    <source>
    </source>
</evidence>
<evidence type="ECO:0000305" key="15"/>
<evidence type="ECO:0000305" key="16">
    <source>
    </source>
</evidence>
<evidence type="ECO:0000305" key="17">
    <source>
    </source>
</evidence>
<evidence type="ECO:0000305" key="18">
    <source>
    </source>
</evidence>
<reference key="1">
    <citation type="journal article" date="2012" name="PLoS Genet.">
        <title>The genomes of the fungal plant pathogens Cladosporium fulvum and Dothistroma septosporum reveal adaptation to different hosts and lifestyles but also signatures of common ancestry.</title>
        <authorList>
            <person name="de Wit P.J.G.M."/>
            <person name="van der Burgt A."/>
            <person name="Oekmen B."/>
            <person name="Stergiopoulos I."/>
            <person name="Abd-Elsalam K.A."/>
            <person name="Aerts A.L."/>
            <person name="Bahkali A.H."/>
            <person name="Beenen H.G."/>
            <person name="Chettri P."/>
            <person name="Cox M.P."/>
            <person name="Datema E."/>
            <person name="de Vries R.P."/>
            <person name="Dhillon B."/>
            <person name="Ganley A.R."/>
            <person name="Griffiths S.A."/>
            <person name="Guo Y."/>
            <person name="Hamelin R.C."/>
            <person name="Henrissat B."/>
            <person name="Kabir M.S."/>
            <person name="Jashni M.K."/>
            <person name="Kema G."/>
            <person name="Klaubauf S."/>
            <person name="Lapidus A."/>
            <person name="Levasseur A."/>
            <person name="Lindquist E."/>
            <person name="Mehrabi R."/>
            <person name="Ohm R.A."/>
            <person name="Owen T.J."/>
            <person name="Salamov A."/>
            <person name="Schwelm A."/>
            <person name="Schijlen E."/>
            <person name="Sun H."/>
            <person name="van den Burg H.A."/>
            <person name="van Ham R.C.H.J."/>
            <person name="Zhang S."/>
            <person name="Goodwin S.B."/>
            <person name="Grigoriev I.V."/>
            <person name="Collemare J."/>
            <person name="Bradshaw R.E."/>
        </authorList>
    </citation>
    <scope>NUCLEOTIDE SEQUENCE [LARGE SCALE GENOMIC DNA]</scope>
    <source>
        <strain>NZE10 / CBS 128990</strain>
    </source>
</reference>
<reference key="2">
    <citation type="journal article" date="2012" name="PLoS Pathog.">
        <title>Diverse lifestyles and strategies of plant pathogenesis encoded in the genomes of eighteen Dothideomycetes fungi.</title>
        <authorList>
            <person name="Ohm R.A."/>
            <person name="Feau N."/>
            <person name="Henrissat B."/>
            <person name="Schoch C.L."/>
            <person name="Horwitz B.A."/>
            <person name="Barry K.W."/>
            <person name="Condon B.J."/>
            <person name="Copeland A.C."/>
            <person name="Dhillon B."/>
            <person name="Glaser F."/>
            <person name="Hesse C.N."/>
            <person name="Kosti I."/>
            <person name="LaButti K."/>
            <person name="Lindquist E.A."/>
            <person name="Lucas S."/>
            <person name="Salamov A.A."/>
            <person name="Bradshaw R.E."/>
            <person name="Ciuffetti L."/>
            <person name="Hamelin R.C."/>
            <person name="Kema G.H.J."/>
            <person name="Lawrence C."/>
            <person name="Scott J.A."/>
            <person name="Spatafora J.W."/>
            <person name="Turgeon B.G."/>
            <person name="de Wit P.J.G.M."/>
            <person name="Zhong S."/>
            <person name="Goodwin S.B."/>
            <person name="Grigoriev I.V."/>
        </authorList>
    </citation>
    <scope>NUCLEOTIDE SEQUENCE [LARGE SCALE GENOMIC DNA]</scope>
    <source>
        <strain>NZE10 / CBS 128990</strain>
    </source>
</reference>
<reference key="3">
    <citation type="journal article" date="2002" name="Appl. Environ. Microbiol.">
        <title>Dothistroma pini, a forest pathogen, contains homologs of aflatoxin biosynthetic pathway genes.</title>
        <authorList>
            <person name="Bradshaw R.E."/>
            <person name="Bhatnagar D."/>
            <person name="Ganley R.J."/>
            <person name="Gillman C.J."/>
            <person name="Monahan B.J."/>
            <person name="Seconi J.M."/>
        </authorList>
    </citation>
    <scope>DISRUPTION PHENOTYPE</scope>
    <scope>FUNCTION</scope>
</reference>
<reference key="4">
    <citation type="journal article" date="2006" name="Mycopathologia">
        <title>A polyketide synthase gene required for biosynthesis of the aflatoxin-like toxin, dothistromin.</title>
        <authorList>
            <person name="Bradshaw R.E."/>
            <person name="Jin H."/>
            <person name="Morgan B.S."/>
            <person name="Schwelm A."/>
            <person name="Teddy O.R."/>
            <person name="Young C.A."/>
            <person name="Zhang S."/>
        </authorList>
    </citation>
    <scope>FUNCTION</scope>
</reference>
<reference key="5">
    <citation type="journal article" date="2007" name="Fungal Genet. Biol.">
        <title>A fragmented aflatoxin-like gene cluster in the forest pathogen Dothistroma septosporum.</title>
        <authorList>
            <person name="Zhang S."/>
            <person name="Schwelm A."/>
            <person name="Jin H."/>
            <person name="Collins L.J."/>
            <person name="Bradshaw R.E."/>
        </authorList>
    </citation>
    <scope>FUNCTION</scope>
    <scope>INDUCTION</scope>
</reference>
<reference key="6">
    <citation type="journal article" date="2008" name="Mycol. Res.">
        <title>Early expression of aflatoxin-like dothistromin genes in the forest pathogen Dothistroma septosporum.</title>
        <authorList>
            <person name="Schwelm A."/>
            <person name="Barron N.J."/>
            <person name="Zhang S."/>
            <person name="Bradshaw R.E."/>
        </authorList>
    </citation>
    <scope>INDUCTION</scope>
</reference>
<reference key="7">
    <citation type="journal article" date="2009" name="Toxins">
        <title>Functional analysis of a putative dothistromin toxin MFS transporter gene.</title>
        <authorList>
            <person name="Bradshaw R.E."/>
            <person name="Feng Z."/>
            <person name="Schwelm A."/>
            <person name="Yang Y."/>
            <person name="Zhang S."/>
        </authorList>
    </citation>
    <scope>SUBCELLULAR LOCATION</scope>
</reference>
<reference key="8">
    <citation type="journal article" date="2010" name="Toxins">
        <title>Genetics of dothistromin biosynthesis of Dothistroma septosporum: an update.</title>
        <authorList>
            <person name="Schwelm A."/>
            <person name="Bradshaw R.E."/>
        </authorList>
    </citation>
    <scope>REVIEW ON FUNCTION</scope>
    <scope>PATHWAY</scope>
</reference>
<reference key="9">
    <citation type="journal article" date="2013" name="Fungal Genet. Biol.">
        <title>Dothistromin genes at multiple separate loci are regulated by AflR.</title>
        <authorList>
            <person name="Chettri P."/>
            <person name="Ehrlich K.C."/>
            <person name="Cary J.W."/>
            <person name="Collemare J."/>
            <person name="Cox M.P."/>
            <person name="Griffiths S.A."/>
            <person name="Olson M.A."/>
            <person name="de Wit P.J."/>
            <person name="Bradshaw R.E."/>
        </authorList>
    </citation>
    <scope>FUNCTION</scope>
    <scope>INDUCTION</scope>
    <scope>PATHWAY</scope>
</reference>
<reference key="10">
    <citation type="journal article" date="2013" name="New Phytol.">
        <title>Fragmentation of an aflatoxin-like gene cluster in a forest pathogen.</title>
        <authorList>
            <person name="Bradshaw R.E."/>
            <person name="Slot J.C."/>
            <person name="Moore G.G."/>
            <person name="Chettri P."/>
            <person name="de Wit P.J."/>
            <person name="Ehrlich K.C."/>
            <person name="Ganley A.R."/>
            <person name="Olson M.A."/>
            <person name="Rokas A."/>
            <person name="Carbone I."/>
            <person name="Cox M.P."/>
        </authorList>
    </citation>
    <scope>FUNCTION</scope>
</reference>
<reference key="11">
    <citation type="journal article" date="2015" name="Fungal Biol.">
        <title>Regulation of the aflatoxin-like toxin dothistromin by AflJ.</title>
        <authorList>
            <person name="Chettri P."/>
            <person name="Ehrlich K.C."/>
            <person name="Bradshaw R.E."/>
        </authorList>
    </citation>
    <scope>INDUCTION</scope>
</reference>
<protein>
    <recommendedName>
        <fullName evidence="14">Versicolorin reductase 1</fullName>
        <shortName evidence="14">VER-1</shortName>
        <ecNumber evidence="17">1.1.-.-</ecNumber>
    </recommendedName>
    <alternativeName>
        <fullName evidence="12">Dothistromin biosynthesis protein A</fullName>
    </alternativeName>
</protein>
<accession>M2WJF1</accession>
<name>VER1_DOTSN</name>
<feature type="chain" id="PRO_0000443451" description="Versicolorin reductase 1">
    <location>
        <begin position="1"/>
        <end position="263"/>
    </location>
</feature>
<feature type="active site" description="Proton donor" evidence="2">
    <location>
        <position position="144"/>
    </location>
</feature>
<feature type="active site" description="Proton donor" evidence="2">
    <location>
        <position position="145"/>
    </location>
</feature>
<feature type="active site" description="Proton acceptor" evidence="4">
    <location>
        <position position="159"/>
    </location>
</feature>
<feature type="active site" description="Lowers pKa of active site Tyr" evidence="2">
    <location>
        <position position="163"/>
    </location>
</feature>
<feature type="binding site" evidence="1">
    <location>
        <position position="22"/>
    </location>
    <ligand>
        <name>NADP(+)</name>
        <dbReference type="ChEBI" id="CHEBI:58349"/>
    </ligand>
</feature>
<feature type="binding site" evidence="1">
    <location>
        <position position="68"/>
    </location>
    <ligand>
        <name>NADP(+)</name>
        <dbReference type="ChEBI" id="CHEBI:58349"/>
    </ligand>
</feature>
<feature type="binding site" evidence="2">
    <location>
        <position position="95"/>
    </location>
    <ligand>
        <name>NADP(+)</name>
        <dbReference type="ChEBI" id="CHEBI:58349"/>
    </ligand>
</feature>
<feature type="binding site" evidence="1">
    <location>
        <position position="128"/>
    </location>
    <ligand>
        <name>NADP(+)</name>
        <dbReference type="ChEBI" id="CHEBI:58349"/>
    </ligand>
</feature>
<feature type="binding site" evidence="2">
    <location>
        <position position="159"/>
    </location>
    <ligand>
        <name>NADP(+)</name>
        <dbReference type="ChEBI" id="CHEBI:58349"/>
    </ligand>
</feature>
<feature type="binding site" evidence="2">
    <location>
        <position position="163"/>
    </location>
    <ligand>
        <name>NADP(+)</name>
        <dbReference type="ChEBI" id="CHEBI:58349"/>
    </ligand>
</feature>
<feature type="binding site" evidence="2">
    <location>
        <position position="192"/>
    </location>
    <ligand>
        <name>NADP(+)</name>
        <dbReference type="ChEBI" id="CHEBI:58349"/>
    </ligand>
</feature>
<feature type="binding site" evidence="1">
    <location>
        <position position="194"/>
    </location>
    <ligand>
        <name>NADP(+)</name>
        <dbReference type="ChEBI" id="CHEBI:58349"/>
    </ligand>
</feature>
<comment type="function">
    <text evidence="3 5 6 13 16 17 18">Versicolorin reductase; part of the fragmented gene cluster that mediates the biosynthesis of dothistromin (DOTH), a polyketide toxin very similar in structure to the aflatoxin precursor, versicolorin B (PubMed:12039746, PubMed:17683963, PubMed:22069571, PubMed:23207690, PubMed:23448391). The first step of the pathway is the conversion of acetate to norsolorinic acid (NOR) and requires the fatty acid synthase subunits hexA and hexB, as well as the polyketide synthase pksA (PubMed:16649078, PubMed:23207690). PksA combines a hexanoyl starter unit and 7 malonyl-CoA extender units to synthesize the precursor NOR (By similarity). The hexanoyl starter unit is provided to the acyl-carrier protein (ACP) domain by the fungal fatty acid synthase hexA/hexB (By similarity). The second step is the conversion of NOR to averantin (AVN) and requires the norsolorinic acid ketoreductase nor1, which catalyzes the dehydration of norsolorinic acid to form (1'S)-averantin (PubMed:23207690). The cytochrome P450 monooxygenase avnA then catalyzes the hydroxylation of AVN to 5'hydroxyaverantin (HAVN) (PubMed:23207690). The next step is performed by adhA that transforms HAVN to averufin (AVF) (PubMed:23207690). Averufin might then be converted to hydroxyversicolorone by cypX and avfA (PubMed:23207690). Hydroxyversicolorone is further converted versiconal hemiacetal acetate (VHA) by moxY (PubMed:23207690). VHA is then the substrate for the versiconal hemiacetal acetate esterase est1 to yield versiconal (VAL) (PubMed:23207690). Versicolorin B synthase vbsA then converts VAL to versicolorin B (VERB) by closing the bisfuran ring (PubMed:16649078, PubMed:23207690). Then, the activity of the versicolorin B desaturase verB leads to versicolorin A (VERA) (PubMed:23207690). DotB, a predicted chloroperoxidase, may perform epoxidation of the A-ring of VERA (PubMed:23207690). Alternatively, a cytochrome P450, such as cypX or avnA could catalyze this step (PubMed:23207690). It is also possible that another, uncharacterized, cytochrome P450 enzyme is responsible for this step (PubMed:23207690). Opening of the epoxide could potentially be achieved by the epoxide hydrolase epoA (PubMed:23207690). However, epoA seems not to be required for DOTH biosynthesis, but other epoxide hydrolases may have the ability to complement this hydrolysis (PubMed:23207690). Alternatively, opening of the epoxide ring could be achieved non-enzymatically (PubMed:23207690). The next step is the deoxygenation of ring A to yield the 5,8-dihydroxyanthraquinone which is most likely catalyzed by the NADPH dehydrogenase encoded by ver1 (PubMed:23207690). The last stages of DOTH biosynthesis are proposed to involve hydroxylation of the bisfuran (PubMed:23207690). OrdB and norB might have oxidative roles here (PubMed:23207690). An alternative possibility is that cytochrome P450 monoogenases such as avnA and cypX might perform these steps in addition to previously proposed steps (PubMed:23207690).</text>
</comment>
<comment type="pathway">
    <text evidence="13 17">Mycotoxin biosynthesis.</text>
</comment>
<comment type="subcellular location">
    <subcellularLocation>
        <location evidence="9">Cytoplasm</location>
        <location evidence="9">Cytosol</location>
    </subcellularLocation>
</comment>
<comment type="induction">
    <text evidence="7 8 10 11">Expression is positively regulated by the dothistromin-specific transcription factors aflR and aflJ (PubMed:23207690, PubMed:25986547). Dothistromin biosynthetic proteins are co-regulated, showing a high level of expression at ealy exponential phase with a subsequent decline in older cultures (PubMed:17683963, PubMed:18262779).</text>
</comment>
<comment type="disruption phenotype">
    <text evidence="5">Blocks the production of dothistromin and accumulates versicolorin A (PubMed:12039746).</text>
</comment>
<comment type="similarity">
    <text evidence="15">Belongs to the short-chain dehydrogenases/reductases (SDR) family.</text>
</comment>
<proteinExistence type="evidence at transcript level"/>
<gene>
    <name evidence="14" type="primary">ver1</name>
    <name evidence="12" type="synonym">dotA</name>
    <name type="ORF">DOTSEDRAFT_192193</name>
</gene>
<sequence>MSVDNFRLDGKVALVTGSGRGIGAAIAIELGKRGANVVVNYSRAVAEANKVVETIIANGTKAIAIKADVGEIDQVAKMMDQAVEHFGQLDIVSSNAGLVSFGHLKDVTGDEFDRVFRVNTRGQFFVAREAYRHLSVGGRIILTSSNTASIKGVPKHAIYSGSKGAIDTFVRCMAIDAGDKKITVNAVAPGAIKTDMYAAVAREYIPGGDKFTDEQVDECAAWLSPLERVGLPADIGRVVCFLASDAAEWVSGKILGIDGGAFR</sequence>
<keyword id="KW-0963">Cytoplasm</keyword>
<keyword id="KW-0521">NADP</keyword>
<keyword id="KW-0560">Oxidoreductase</keyword>
<keyword id="KW-1185">Reference proteome</keyword>
<organism>
    <name type="scientific">Dothistroma septosporum (strain NZE10 / CBS 128990)</name>
    <name type="common">Red band needle blight fungus</name>
    <name type="synonym">Mycosphaerella pini</name>
    <dbReference type="NCBI Taxonomy" id="675120"/>
    <lineage>
        <taxon>Eukaryota</taxon>
        <taxon>Fungi</taxon>
        <taxon>Dikarya</taxon>
        <taxon>Ascomycota</taxon>
        <taxon>Pezizomycotina</taxon>
        <taxon>Dothideomycetes</taxon>
        <taxon>Dothideomycetidae</taxon>
        <taxon>Mycosphaerellales</taxon>
        <taxon>Mycosphaerellaceae</taxon>
        <taxon>Dothistroma</taxon>
    </lineage>
</organism>
<dbReference type="EC" id="1.1.-.-" evidence="17"/>
<dbReference type="EMBL" id="KB446546">
    <property type="protein sequence ID" value="EME39093.1"/>
    <property type="molecule type" value="Genomic_DNA"/>
</dbReference>
<dbReference type="SMR" id="M2WJF1"/>
<dbReference type="STRING" id="675120.M2WJF1"/>
<dbReference type="EnsemblFungi" id="EME39093">
    <property type="protein sequence ID" value="EME39093"/>
    <property type="gene ID" value="DOTSEDRAFT_192193"/>
</dbReference>
<dbReference type="eggNOG" id="KOG0725">
    <property type="taxonomic scope" value="Eukaryota"/>
</dbReference>
<dbReference type="HOGENOM" id="CLU_010194_1_3_1"/>
<dbReference type="OMA" id="IDWDQNV"/>
<dbReference type="OrthoDB" id="47007at2759"/>
<dbReference type="Proteomes" id="UP000016933">
    <property type="component" value="Unassembled WGS sequence"/>
</dbReference>
<dbReference type="GO" id="GO:0005829">
    <property type="term" value="C:cytosol"/>
    <property type="evidence" value="ECO:0007669"/>
    <property type="project" value="UniProtKB-SubCell"/>
</dbReference>
<dbReference type="GO" id="GO:0016614">
    <property type="term" value="F:oxidoreductase activity, acting on CH-OH group of donors"/>
    <property type="evidence" value="ECO:0007669"/>
    <property type="project" value="UniProtKB-ARBA"/>
</dbReference>
<dbReference type="FunFam" id="3.40.50.720:FF:000084">
    <property type="entry name" value="Short-chain dehydrogenase reductase"/>
    <property type="match status" value="1"/>
</dbReference>
<dbReference type="Gene3D" id="3.40.50.720">
    <property type="entry name" value="NAD(P)-binding Rossmann-like Domain"/>
    <property type="match status" value="1"/>
</dbReference>
<dbReference type="InterPro" id="IPR036291">
    <property type="entry name" value="NAD(P)-bd_dom_sf"/>
</dbReference>
<dbReference type="InterPro" id="IPR020904">
    <property type="entry name" value="Sc_DH/Rdtase_CS"/>
</dbReference>
<dbReference type="InterPro" id="IPR002347">
    <property type="entry name" value="SDR_fam"/>
</dbReference>
<dbReference type="PANTHER" id="PTHR48107">
    <property type="entry name" value="NADPH-DEPENDENT ALDEHYDE REDUCTASE-LIKE PROTEIN, CHLOROPLASTIC-RELATED"/>
    <property type="match status" value="1"/>
</dbReference>
<dbReference type="PANTHER" id="PTHR48107:SF7">
    <property type="entry name" value="RE15974P"/>
    <property type="match status" value="1"/>
</dbReference>
<dbReference type="Pfam" id="PF13561">
    <property type="entry name" value="adh_short_C2"/>
    <property type="match status" value="1"/>
</dbReference>
<dbReference type="PRINTS" id="PR00081">
    <property type="entry name" value="GDHRDH"/>
</dbReference>
<dbReference type="PRINTS" id="PR00080">
    <property type="entry name" value="SDRFAMILY"/>
</dbReference>
<dbReference type="SUPFAM" id="SSF51735">
    <property type="entry name" value="NAD(P)-binding Rossmann-fold domains"/>
    <property type="match status" value="1"/>
</dbReference>
<dbReference type="PROSITE" id="PS00061">
    <property type="entry name" value="ADH_SHORT"/>
    <property type="match status" value="1"/>
</dbReference>